<evidence type="ECO:0000255" key="1">
    <source>
        <dbReference type="HAMAP-Rule" id="MF_00406"/>
    </source>
</evidence>
<reference key="1">
    <citation type="journal article" date="2006" name="Nat. Biotechnol.">
        <title>Complete genome sequence of the entomopathogenic and metabolically versatile soil bacterium Pseudomonas entomophila.</title>
        <authorList>
            <person name="Vodovar N."/>
            <person name="Vallenet D."/>
            <person name="Cruveiller S."/>
            <person name="Rouy Z."/>
            <person name="Barbe V."/>
            <person name="Acosta C."/>
            <person name="Cattolico L."/>
            <person name="Jubin C."/>
            <person name="Lajus A."/>
            <person name="Segurens B."/>
            <person name="Vacherie B."/>
            <person name="Wincker P."/>
            <person name="Weissenbach J."/>
            <person name="Lemaitre B."/>
            <person name="Medigue C."/>
            <person name="Boccard F."/>
        </authorList>
    </citation>
    <scope>NUCLEOTIDE SEQUENCE [LARGE SCALE GENOMIC DNA]</scope>
    <source>
        <strain>L48</strain>
    </source>
</reference>
<organism>
    <name type="scientific">Pseudomonas entomophila (strain L48)</name>
    <dbReference type="NCBI Taxonomy" id="384676"/>
    <lineage>
        <taxon>Bacteria</taxon>
        <taxon>Pseudomonadati</taxon>
        <taxon>Pseudomonadota</taxon>
        <taxon>Gammaproteobacteria</taxon>
        <taxon>Pseudomonadales</taxon>
        <taxon>Pseudomonadaceae</taxon>
        <taxon>Pseudomonas</taxon>
    </lineage>
</organism>
<name>FABZ_PSEE4</name>
<comment type="function">
    <text evidence="1">Involved in unsaturated fatty acids biosynthesis. Catalyzes the dehydration of short chain beta-hydroxyacyl-ACPs and long chain saturated and unsaturated beta-hydroxyacyl-ACPs.</text>
</comment>
<comment type="catalytic activity">
    <reaction evidence="1">
        <text>a (3R)-hydroxyacyl-[ACP] = a (2E)-enoyl-[ACP] + H2O</text>
        <dbReference type="Rhea" id="RHEA:13097"/>
        <dbReference type="Rhea" id="RHEA-COMP:9925"/>
        <dbReference type="Rhea" id="RHEA-COMP:9945"/>
        <dbReference type="ChEBI" id="CHEBI:15377"/>
        <dbReference type="ChEBI" id="CHEBI:78784"/>
        <dbReference type="ChEBI" id="CHEBI:78827"/>
        <dbReference type="EC" id="4.2.1.59"/>
    </reaction>
</comment>
<comment type="subcellular location">
    <subcellularLocation>
        <location evidence="1">Cytoplasm</location>
    </subcellularLocation>
</comment>
<comment type="similarity">
    <text evidence="1">Belongs to the thioester dehydratase family. FabZ subfamily.</text>
</comment>
<protein>
    <recommendedName>
        <fullName evidence="1">3-hydroxyacyl-[acyl-carrier-protein] dehydratase FabZ</fullName>
        <ecNumber evidence="1">4.2.1.59</ecNumber>
    </recommendedName>
    <alternativeName>
        <fullName evidence="1">(3R)-hydroxymyristoyl-[acyl-carrier-protein] dehydratase</fullName>
        <shortName evidence="1">(3R)-hydroxymyristoyl-ACP dehydrase</shortName>
    </alternativeName>
    <alternativeName>
        <fullName evidence="1">Beta-hydroxyacyl-ACP dehydratase</fullName>
    </alternativeName>
</protein>
<gene>
    <name evidence="1" type="primary">fabZ</name>
    <name type="ordered locus">PSEEN4209</name>
</gene>
<feature type="chain" id="PRO_0000301913" description="3-hydroxyacyl-[acyl-carrier-protein] dehydratase FabZ">
    <location>
        <begin position="1"/>
        <end position="146"/>
    </location>
</feature>
<feature type="active site" evidence="1">
    <location>
        <position position="49"/>
    </location>
</feature>
<sequence length="146" mass="16597">MMDINEIREYLPHRYPFLLVDRVTELDFEAQSIRAYKNVSINEPFFNGHFPAHPIMPGVLIIEAMAQAAGILGFKMLDAKPADGTLYYFVGSDKLRFRQPVLPGDQLVLEAKFLSRKSMIWKFECRALVDGKPVCSAEITCAERSL</sequence>
<accession>Q1I637</accession>
<keyword id="KW-0963">Cytoplasm</keyword>
<keyword id="KW-0441">Lipid A biosynthesis</keyword>
<keyword id="KW-0444">Lipid biosynthesis</keyword>
<keyword id="KW-0443">Lipid metabolism</keyword>
<keyword id="KW-0456">Lyase</keyword>
<dbReference type="EC" id="4.2.1.59" evidence="1"/>
<dbReference type="EMBL" id="CT573326">
    <property type="protein sequence ID" value="CAK16898.1"/>
    <property type="molecule type" value="Genomic_DNA"/>
</dbReference>
<dbReference type="RefSeq" id="WP_011535269.1">
    <property type="nucleotide sequence ID" value="NC_008027.1"/>
</dbReference>
<dbReference type="SMR" id="Q1I637"/>
<dbReference type="STRING" id="384676.PSEEN4209"/>
<dbReference type="GeneID" id="32807216"/>
<dbReference type="KEGG" id="pen:PSEEN4209"/>
<dbReference type="eggNOG" id="COG0764">
    <property type="taxonomic scope" value="Bacteria"/>
</dbReference>
<dbReference type="HOGENOM" id="CLU_078912_1_0_6"/>
<dbReference type="OrthoDB" id="9772788at2"/>
<dbReference type="Proteomes" id="UP000000658">
    <property type="component" value="Chromosome"/>
</dbReference>
<dbReference type="GO" id="GO:0005737">
    <property type="term" value="C:cytoplasm"/>
    <property type="evidence" value="ECO:0007669"/>
    <property type="project" value="UniProtKB-SubCell"/>
</dbReference>
<dbReference type="GO" id="GO:0016020">
    <property type="term" value="C:membrane"/>
    <property type="evidence" value="ECO:0007669"/>
    <property type="project" value="GOC"/>
</dbReference>
<dbReference type="GO" id="GO:0019171">
    <property type="term" value="F:(3R)-hydroxyacyl-[acyl-carrier-protein] dehydratase activity"/>
    <property type="evidence" value="ECO:0007669"/>
    <property type="project" value="UniProtKB-EC"/>
</dbReference>
<dbReference type="GO" id="GO:0006633">
    <property type="term" value="P:fatty acid biosynthetic process"/>
    <property type="evidence" value="ECO:0007669"/>
    <property type="project" value="UniProtKB-UniRule"/>
</dbReference>
<dbReference type="GO" id="GO:0009245">
    <property type="term" value="P:lipid A biosynthetic process"/>
    <property type="evidence" value="ECO:0007669"/>
    <property type="project" value="UniProtKB-UniRule"/>
</dbReference>
<dbReference type="CDD" id="cd01288">
    <property type="entry name" value="FabZ"/>
    <property type="match status" value="1"/>
</dbReference>
<dbReference type="FunFam" id="3.10.129.10:FF:000001">
    <property type="entry name" value="3-hydroxyacyl-[acyl-carrier-protein] dehydratase FabZ"/>
    <property type="match status" value="1"/>
</dbReference>
<dbReference type="Gene3D" id="3.10.129.10">
    <property type="entry name" value="Hotdog Thioesterase"/>
    <property type="match status" value="1"/>
</dbReference>
<dbReference type="HAMAP" id="MF_00406">
    <property type="entry name" value="FabZ"/>
    <property type="match status" value="1"/>
</dbReference>
<dbReference type="InterPro" id="IPR013114">
    <property type="entry name" value="FabA_FabZ"/>
</dbReference>
<dbReference type="InterPro" id="IPR010084">
    <property type="entry name" value="FabZ"/>
</dbReference>
<dbReference type="InterPro" id="IPR029069">
    <property type="entry name" value="HotDog_dom_sf"/>
</dbReference>
<dbReference type="NCBIfam" id="TIGR01750">
    <property type="entry name" value="fabZ"/>
    <property type="match status" value="1"/>
</dbReference>
<dbReference type="NCBIfam" id="NF000582">
    <property type="entry name" value="PRK00006.1"/>
    <property type="match status" value="1"/>
</dbReference>
<dbReference type="PANTHER" id="PTHR30272">
    <property type="entry name" value="3-HYDROXYACYL-[ACYL-CARRIER-PROTEIN] DEHYDRATASE"/>
    <property type="match status" value="1"/>
</dbReference>
<dbReference type="PANTHER" id="PTHR30272:SF1">
    <property type="entry name" value="3-HYDROXYACYL-[ACYL-CARRIER-PROTEIN] DEHYDRATASE"/>
    <property type="match status" value="1"/>
</dbReference>
<dbReference type="Pfam" id="PF07977">
    <property type="entry name" value="FabA"/>
    <property type="match status" value="1"/>
</dbReference>
<dbReference type="SUPFAM" id="SSF54637">
    <property type="entry name" value="Thioesterase/thiol ester dehydrase-isomerase"/>
    <property type="match status" value="1"/>
</dbReference>
<proteinExistence type="inferred from homology"/>